<name>CM3A_CONGE</name>
<evidence type="ECO:0000255" key="1"/>
<evidence type="ECO:0000269" key="2">
    <source>
    </source>
</evidence>
<evidence type="ECO:0000269" key="3">
    <source>
    </source>
</evidence>
<evidence type="ECO:0000269" key="4">
    <source>
    </source>
</evidence>
<evidence type="ECO:0000269" key="5">
    <source>
    </source>
</evidence>
<evidence type="ECO:0000269" key="6">
    <source>
    </source>
</evidence>
<evidence type="ECO:0000269" key="7">
    <source>
    </source>
</evidence>
<evidence type="ECO:0000269" key="8">
    <source>
    </source>
</evidence>
<evidence type="ECO:0000269" key="9">
    <source>
    </source>
</evidence>
<evidence type="ECO:0000269" key="10">
    <source>
    </source>
</evidence>
<evidence type="ECO:0000269" key="11">
    <source>
    </source>
</evidence>
<evidence type="ECO:0000269" key="12">
    <source>
    </source>
</evidence>
<evidence type="ECO:0000269" key="13">
    <source>
    </source>
</evidence>
<evidence type="ECO:0000303" key="14">
    <source>
    </source>
</evidence>
<evidence type="ECO:0000303" key="15">
    <source>
    </source>
</evidence>
<evidence type="ECO:0000303" key="16">
    <source>
    </source>
</evidence>
<evidence type="ECO:0000303" key="17">
    <source>
    </source>
</evidence>
<evidence type="ECO:0000303" key="18">
    <source>
    </source>
</evidence>
<evidence type="ECO:0000305" key="19"/>
<evidence type="ECO:0000305" key="20">
    <source>
    </source>
</evidence>
<evidence type="ECO:0000312" key="21">
    <source>
        <dbReference type="PDB" id="1TCG"/>
    </source>
</evidence>
<evidence type="ECO:0000312" key="22">
    <source>
        <dbReference type="PDB" id="1TCH"/>
    </source>
</evidence>
<evidence type="ECO:0000312" key="23">
    <source>
        <dbReference type="PDB" id="1TCJ"/>
    </source>
</evidence>
<evidence type="ECO:0000312" key="24">
    <source>
        <dbReference type="PDB" id="1TCK"/>
    </source>
</evidence>
<evidence type="ECO:0007829" key="25">
    <source>
        <dbReference type="PDB" id="1TCG"/>
    </source>
</evidence>
<protein>
    <recommendedName>
        <fullName evidence="15 17">Mu-conotoxin GIIIA</fullName>
    </recommendedName>
    <alternativeName>
        <fullName evidence="14">G3.9</fullName>
    </alternativeName>
    <alternativeName>
        <fullName evidence="16 18">Geographutoxin I</fullName>
        <shortName evidence="16 18">GTx-I</shortName>
    </alternativeName>
    <alternativeName>
        <fullName>Myotoxin I</fullName>
    </alternativeName>
</protein>
<organism>
    <name type="scientific">Conus geographus</name>
    <name type="common">Geography cone</name>
    <name type="synonym">Nubecula geographus</name>
    <dbReference type="NCBI Taxonomy" id="6491"/>
    <lineage>
        <taxon>Eukaryota</taxon>
        <taxon>Metazoa</taxon>
        <taxon>Spiralia</taxon>
        <taxon>Lophotrochozoa</taxon>
        <taxon>Mollusca</taxon>
        <taxon>Gastropoda</taxon>
        <taxon>Caenogastropoda</taxon>
        <taxon>Neogastropoda</taxon>
        <taxon>Conoidea</taxon>
        <taxon>Conidae</taxon>
        <taxon>Conus</taxon>
        <taxon>Gastridium</taxon>
    </lineage>
</organism>
<feature type="signal peptide" evidence="1">
    <location>
        <begin position="1"/>
        <end position="20"/>
    </location>
</feature>
<feature type="propeptide" id="PRO_0000246004" evidence="11 13">
    <location>
        <begin position="21"/>
        <end position="51"/>
    </location>
</feature>
<feature type="peptide" id="PRO_0000044493" description="Mu-conotoxin GIIIA" evidence="11 13">
    <location>
        <begin position="52"/>
        <end position="73"/>
    </location>
</feature>
<feature type="site" description="Important for binding sodium channel">
    <location>
        <position position="64"/>
    </location>
</feature>
<feature type="modified residue" description="4-hydroxyproline; partial" evidence="7 8 11">
    <location>
        <position position="57"/>
    </location>
</feature>
<feature type="modified residue" description="4-hydroxyproline; partial" evidence="7 8 11">
    <location>
        <position position="58"/>
    </location>
</feature>
<feature type="modified residue" description="4-hydroxyproline" evidence="7 8 11">
    <location>
        <position position="68"/>
    </location>
</feature>
<feature type="modified residue" description="Alanine amide" evidence="7 8 11">
    <location>
        <position position="73"/>
    </location>
</feature>
<feature type="disulfide bond" evidence="4 7 8 10 21 22 23 24">
    <location>
        <begin position="54"/>
        <end position="66"/>
    </location>
</feature>
<feature type="disulfide bond" evidence="4 7 8 10 21 22 23 24">
    <location>
        <begin position="55"/>
        <end position="71"/>
    </location>
</feature>
<feature type="disulfide bond" evidence="4 7 8 10 21 22 23 24">
    <location>
        <begin position="61"/>
        <end position="72"/>
    </location>
</feature>
<feature type="mutagenesis site" description="5-fold decrease in activity on Nav channels (probably Nav1.4/SCN4A) from rat diaphragm." evidence="5">
    <original>R</original>
    <variation>A</variation>
    <location>
        <position position="52"/>
    </location>
</feature>
<feature type="mutagenesis site" description="2-fold decrease in activity on Nav channels (probably Nav1.4/SCN4A) from rat diaphragm." evidence="5">
    <original>D</original>
    <variation>A</variation>
    <location>
        <position position="53"/>
    </location>
</feature>
<feature type="mutagenesis site" description="Increase in activity on Nav channel from eel electric membranes, and decrease in binding to rat Nav1.4/SCN4A by increasing the rate of dissociation from rat Nav1.4/SCN4A channel and decreasing the rate of association." evidence="3">
    <original>D</original>
    <variation>N</variation>
    <location>
        <position position="53"/>
    </location>
</feature>
<feature type="mutagenesis site" description="Important decrease in activity on Nav channel from eel electric membranes, and decrease in binding to rat Nav1.4/SCN4A by increasing the rate of dissociation from rat Nav1.4/SCN4A channel and potently decreasing the rate of association." evidence="3">
    <original>K</original>
    <variation>Q</variation>
    <location>
        <position position="59"/>
    </location>
</feature>
<feature type="mutagenesis site" description="3.5-fold decrease in activity on Nav channels (probably Nav1.4/SCN4A) from rat diaphragm." evidence="5">
    <original>D</original>
    <variation>A</variation>
    <location>
        <position position="63"/>
    </location>
</feature>
<feature type="mutagenesis site" description="200-fold decrease in activity on Nav channels (probably Nav1.4/SCN4A) from rat diaphragm." evidence="5">
    <original>R</original>
    <variation>A</variation>
    <location>
        <position position="64"/>
    </location>
</feature>
<feature type="mutagenesis site" description="Loss of activity on Nav channel from eel electric membranes, and important decrease in binding to rat Nav1.4/SCN4A by increasing the rate of dissociation from rat Nav1.4/SCN4A channel without modifying the rate of association." evidence="3">
    <original>R</original>
    <variation>Q</variation>
    <location>
        <position position="64"/>
    </location>
</feature>
<feature type="mutagenesis site" description="Increase in activity on Nav channel from eel electric membranes, and important increase in binding to rat Nav1.4/SCN4A (seemingly irreversible) by potently decreasing the rates of both dissociation and association to rat Nav1.4/SCN4A channel." evidence="3">
    <original>Q</original>
    <variation>K</variation>
    <location>
        <position position="69"/>
    </location>
</feature>
<feature type="mutagenesis site" description="25-fold decrease in activity on Nav channels (probably Nav1.4/SCN4A) from rat diaphragm." evidence="5">
    <original>R</original>
    <variation>A</variation>
    <location>
        <position position="70"/>
    </location>
</feature>
<feature type="strand" evidence="25">
    <location>
        <begin position="54"/>
        <end position="58"/>
    </location>
</feature>
<feature type="helix" evidence="25">
    <location>
        <begin position="64"/>
        <end position="66"/>
    </location>
</feature>
<feature type="turn" evidence="25">
    <location>
        <begin position="70"/>
        <end position="72"/>
    </location>
</feature>
<comment type="function">
    <text evidence="2 6 9 11 12">Mu-conotoxins block voltage-gated sodium channels (Nav). This toxin potently blocks rat Nav1.4/SCN4A (IC(50)= 19-110 nM) (PubMed:10627583, PubMed:1326324, PubMed:1654319, PubMed:21652775, PubMed:30360356). It also moderately blocks rNav1.1/SCN1A (Kd=260 nM), rNav1.2/SCN2A (IC(50)=2.7-17.8 uM), and mNav1.6/SCN8A (IC(50)=680 nM) (PubMed:10627583, PubMed:21652775). The inhibition is reversible. In vivo, induces paralysis to an isolated skeletal muscle preparation from frog (cutaneous pectoralis) within a few minutes (PubMed:2410412).</text>
</comment>
<comment type="subcellular location">
    <subcellularLocation>
        <location evidence="13">Secreted</location>
    </subcellularLocation>
</comment>
<comment type="tissue specificity">
    <text evidence="20">Expressed by the venom duct.</text>
</comment>
<comment type="domain">
    <text evidence="19">The cysteine framework is III (CC-C-C-CC). Classified in the M-4 branch, since 4 residues stand between the fourth and the fifth cysteine residues.</text>
</comment>
<comment type="PTM">
    <text evidence="7 8">Hydroxylated; hydroxylations improve the ability to block Nav1.4/SCN4A sodium channels but does not affect folding.</text>
</comment>
<comment type="miscellaneous">
    <text evidence="2 9">Negative results: does not or only weakly blocks rNav1.3/SCN3A, rNav1.5/SCN5A, rNav1.7/SCN9A (IC(50)=6.0 uM and &gt;100 uM), and rNav1.8/SCN10A (PubMed:10627583, PubMed:21652775).</text>
</comment>
<comment type="similarity">
    <text evidence="19">Belongs to the conotoxin M superfamily.</text>
</comment>
<reference key="1">
    <citation type="journal article" date="2014" name="Nat. Commun.">
        <title>Evolution of separate predation- and defence-evoked venoms in carnivorous cone snails.</title>
        <authorList>
            <person name="Dutertre S."/>
            <person name="Jin A.-H."/>
            <person name="Vetter I."/>
            <person name="Hamilton B."/>
            <person name="Sunagar K."/>
            <person name="Lavergne V."/>
            <person name="Dutertre V."/>
            <person name="Fry B.G."/>
            <person name="Antunes A."/>
            <person name="Venter D.J."/>
            <person name="Alewood P.F."/>
            <person name="Lewis R.J."/>
        </authorList>
    </citation>
    <scope>NUCLEOTIDE SEQUENCE [MRNA]</scope>
    <scope>IDENTIFICATION BY MASS SPECTROMETRY</scope>
    <source>
        <tissue>Venom</tissue>
        <tissue>Venom duct</tissue>
    </source>
</reference>
<reference key="2">
    <citation type="journal article" date="2005" name="Biochemistry">
        <title>Definition of the M-conotoxin superfamily: characterization of novel peptides from molluscivorous Conus venoms.</title>
        <authorList>
            <person name="Corpuz G.P."/>
            <person name="Jacobsen R.B."/>
            <person name="Jimenez E.C."/>
            <person name="Watkins M."/>
            <person name="Walker C."/>
            <person name="Colledge C."/>
            <person name="Garrett J.E."/>
            <person name="McDougal O."/>
            <person name="Li W."/>
            <person name="Gray W.R."/>
            <person name="Hillyard D.R."/>
            <person name="Rivier J."/>
            <person name="McIntosh J.M."/>
            <person name="Cruz L.J."/>
            <person name="Olivera B.M."/>
        </authorList>
    </citation>
    <scope>NUCLEOTIDE SEQUENCE [MRNA] OF 2-75</scope>
    <source>
        <tissue>Venom duct</tissue>
    </source>
</reference>
<reference key="3">
    <citation type="journal article" date="1985" name="J. Biol. Chem.">
        <title>Conus geographus toxins that discriminate between neuronal and muscle sodium channels.</title>
        <authorList>
            <person name="Cruz L.J."/>
            <person name="Gray W.R."/>
            <person name="Olivera B.M."/>
            <person name="Zeikus R.D."/>
            <person name="Kerr L."/>
            <person name="Yoshikami D."/>
            <person name="Moczydlowski E."/>
        </authorList>
    </citation>
    <scope>PROTEIN SEQUENCE OF 52-73</scope>
    <scope>FUNCTION</scope>
    <scope>BIOASSAY</scope>
    <source>
        <tissue>Venom</tissue>
    </source>
</reference>
<reference key="4">
    <citation type="journal article" date="1983" name="FEBS Lett.">
        <title>The amino acid sequences of homologous hydroxyproline-containing myotoxins from the marine snail Conus geographus venom.</title>
        <authorList>
            <person name="Sato S."/>
            <person name="Nakamura H."/>
            <person name="Ohizumi Y."/>
            <person name="Kobayashi J."/>
            <person name="Hirata Y."/>
        </authorList>
    </citation>
    <scope>PROTEIN SEQUENCE OF 52-73</scope>
    <scope>SUBCELLULAR LOCATION</scope>
    <source>
        <tissue>Venom</tissue>
    </source>
</reference>
<reference key="5">
    <citation type="journal article" date="1990" name="FEBS Lett.">
        <title>Disulfide pairings in geographutoxin I, a peptide neurotoxin from Conus geographus.</title>
        <authorList>
            <person name="Hidaka Y."/>
            <person name="Sato K."/>
            <person name="Nakamura H."/>
            <person name="Kobayashi J."/>
            <person name="Ohizumi Y."/>
            <person name="Simonishi Y."/>
        </authorList>
    </citation>
    <scope>DISULFIDE BONDS</scope>
</reference>
<reference key="6">
    <citation type="journal article" date="1991" name="J. Biol. Chem.">
        <title>Active site of mu-conotoxin GIIIA, a peptide blocker of muscle sodium channels.</title>
        <authorList>
            <person name="Sato K."/>
            <person name="Ishida Y."/>
            <person name="Wakamatsu K."/>
            <person name="Kato R."/>
            <person name="Honda H."/>
            <person name="Ohizumi Y."/>
            <person name="Nakamura H."/>
            <person name="Ohya M."/>
            <person name="Lancelin J.M."/>
            <person name="Kohda D."/>
        </authorList>
    </citation>
    <scope>FUNCTION</scope>
    <scope>MUTAGENESIS OF ARG-52; ASP-53; ASP-63; ARG-64 AND ARG-70</scope>
</reference>
<reference key="7">
    <citation type="journal article" date="1992" name="Biochemistry">
        <title>Action of derivatives of mu-conotoxin GIIIA on sodium channels. Single amino acid substitutions in the toxin separately affect association and dissociation rates.</title>
        <authorList>
            <person name="Becker S."/>
            <person name="Prusak-Sochaczewski E."/>
            <person name="Zamponi G."/>
            <person name="Beck-Sickinger A.G."/>
            <person name="Gordon R.D."/>
            <person name="French R.J."/>
        </authorList>
    </citation>
    <scope>FUNCTION</scope>
    <scope>MUTAGENESIS OF ASP-53; LYS-59; ARG-64 AND GLN-69</scope>
</reference>
<reference key="8">
    <citation type="journal article" date="2000" name="J. Neurosci.">
        <title>Distinction among neuronal subtypes of voltage-activated sodium channels by mu-conotoxin PIIIA.</title>
        <authorList>
            <person name="Safo P."/>
            <person name="Rosenbaum T."/>
            <person name="Shcherbatko A."/>
            <person name="Choi D.-Y."/>
            <person name="Han E."/>
            <person name="Toledo-Aral J.J."/>
            <person name="Olivera B.M."/>
            <person name="Brehm P."/>
            <person name="Mandel G."/>
        </authorList>
    </citation>
    <scope>FUNCTION</scope>
</reference>
<reference key="9">
    <citation type="journal article" date="2008" name="Biochemistry">
        <title>Role of hydroxyprolines in the in vitro oxidative folding and biological activity of conotoxins.</title>
        <authorList>
            <person name="Lopez-Vera E."/>
            <person name="Walewska A."/>
            <person name="Skalicky J.J."/>
            <person name="Olivera B.M."/>
            <person name="Bulaj G."/>
        </authorList>
    </citation>
    <scope>SYNTHESIS OF 52-73</scope>
    <scope>ROLE OF HYDROXYLATION</scope>
</reference>
<reference key="10">
    <citation type="journal article" date="2009" name="Toxicon">
        <title>Pruning nature: biodiversity-derived discovery of novel sodium channel blocking conotoxins from Conus bullatus.</title>
        <authorList>
            <person name="Holford M."/>
            <person name="Zhang M.-M."/>
            <person name="Gowd K.H."/>
            <person name="Azam L."/>
            <person name="Green B.R."/>
            <person name="Watkins M."/>
            <person name="Ownby J.-P."/>
            <person name="Yoshikami D."/>
            <person name="Bulaj G."/>
            <person name="Olivera B.M."/>
        </authorList>
    </citation>
    <scope>FUNCTION</scope>
</reference>
<reference key="11">
    <citation type="journal article" date="2011" name="Proc. Natl. Acad. Sci. U.S.A.">
        <title>mu-Conotoxins that differentially block sodium channels Nav1.1 through 1.8 identify those responsible for action potentials in sciatic nerve.</title>
        <authorList>
            <person name="Wilson M.J."/>
            <person name="Yoshikami D."/>
            <person name="Azam L."/>
            <person name="Gajewiak J."/>
            <person name="Olivera B.M."/>
            <person name="Bulaj G."/>
            <person name="Zhang M.M."/>
        </authorList>
    </citation>
    <scope>FUNCTION</scope>
    <scope>SYNTHESIS OF 52-73</scope>
</reference>
<reference key="12">
    <citation type="journal article" date="2018" name="Molecules">
        <title>NMR Structure of mu-conotoxin GIIIC: leucine 18 induces local repacking of the N-terminus resulting in reduced Nav channel potency.</title>
        <authorList>
            <person name="Harvey P.J."/>
            <person name="Kurniawan N.D."/>
            <person name="Finol-Urdaneta R.K."/>
            <person name="McArthur J.R."/>
            <person name="Van Lysebetten D."/>
            <person name="Dash T.S."/>
            <person name="Hill J.M."/>
            <person name="Adams D.J."/>
            <person name="Durek T."/>
            <person name="Craik D.J."/>
        </authorList>
    </citation>
    <scope>FUNCTION</scope>
</reference>
<reference key="13">
    <citation type="journal article" date="1991" name="FEBS Lett.">
        <title>Solution structure of mu-conotoxin GIIIA analysed by 2D-NMR and distance geometry calculations.</title>
        <authorList>
            <person name="Ott K.-H."/>
            <person name="Becker S."/>
            <person name="Gordon R.D."/>
            <person name="Rueterjans H."/>
        </authorList>
    </citation>
    <scope>STRUCTURE BY NMR OF 52-73</scope>
    <scope>HYDROXYLATION AT PRO-57; PRO-58 AND PRO-68</scope>
    <scope>AMIDATION AT ALA-73</scope>
    <scope>DISULFIDE BONDS</scope>
</reference>
<reference key="14">
    <citation type="journal article" date="1991" name="Biochemistry">
        <title>Tertiary structure of conotoxin GIIIA in aqueous solution.</title>
        <authorList>
            <person name="Lancelin J.-M."/>
            <person name="Kohda D."/>
            <person name="Tate S."/>
            <person name="Yanagawa Y."/>
            <person name="Abe T."/>
            <person name="Satake M."/>
            <person name="Inagaki F."/>
        </authorList>
    </citation>
    <scope>STRUCTURE BY NMR OF 52-73</scope>
    <scope>HYDROXYLATION AT PRO-57; PRO-58 AND PRO-68</scope>
    <scope>AMIDATION AT ALA-73</scope>
    <scope>DISULFIDE BONDS</scope>
</reference>
<reference key="15">
    <citation type="journal article" date="1992" name="Biochemistry">
        <title>Structure-activity relationships of mu-conotoxin GIIIA: structure determination of active and inactive sodium channel blocker peptides by NMR and simulated annealing calculations.</title>
        <authorList>
            <person name="Wakamatsu K."/>
            <person name="Kohda D."/>
            <person name="Hatanaka H."/>
            <person name="Lancelin J.M."/>
            <person name="Ishida Y."/>
            <person name="Oya M."/>
            <person name="Nakamura H."/>
            <person name="Inagaki F."/>
            <person name="Sato K."/>
        </authorList>
    </citation>
    <scope>STRUCTURE BY NMR OF 52-73 (WILD-TYPE AND MUTANT ARG-64)</scope>
    <scope>SYNTHESIS OF 52-73</scope>
    <scope>DISULFIDE BONDS</scope>
    <scope>MUTAGENESIS OF ARG-64</scope>
</reference>
<accession>P01523</accession>
<accession>X5IG12</accession>
<proteinExistence type="evidence at protein level"/>
<sequence>MMSKLGVLLTICLLLFPLTALPMDGDEPANRPVERMQDNISSEQYPLFEKRRDCCTPPKKCKDRQCKPQRCCAGR</sequence>
<dbReference type="EMBL" id="AB910835">
    <property type="protein sequence ID" value="BAO65603.1"/>
    <property type="molecule type" value="mRNA"/>
</dbReference>
<dbReference type="PIR" id="A01786">
    <property type="entry name" value="MXKN1"/>
</dbReference>
<dbReference type="PDB" id="1TCG">
    <property type="method" value="NMR"/>
    <property type="chains" value="A=52-73"/>
</dbReference>
<dbReference type="PDB" id="1TCH">
    <property type="method" value="NMR"/>
    <property type="chains" value="A=52-73"/>
</dbReference>
<dbReference type="PDB" id="1TCJ">
    <property type="method" value="NMR"/>
    <property type="chains" value="A=52-73"/>
</dbReference>
<dbReference type="PDB" id="1TCK">
    <property type="method" value="NMR"/>
    <property type="chains" value="A=52-73"/>
</dbReference>
<dbReference type="PDBsum" id="1TCG"/>
<dbReference type="PDBsum" id="1TCH"/>
<dbReference type="PDBsum" id="1TCJ"/>
<dbReference type="PDBsum" id="1TCK"/>
<dbReference type="SMR" id="P01523"/>
<dbReference type="TCDB" id="8.B.28.1.3">
    <property type="family name" value="the mu-conotoxin (mu-conotoxin) family"/>
</dbReference>
<dbReference type="ConoServer" id="1570">
    <property type="toxin name" value="GIIIA [R13A]"/>
</dbReference>
<dbReference type="ConoServer" id="1464">
    <property type="toxin name" value="GIIIA precursor"/>
</dbReference>
<dbReference type="EvolutionaryTrace" id="P01523"/>
<dbReference type="GO" id="GO:0005576">
    <property type="term" value="C:extracellular region"/>
    <property type="evidence" value="ECO:0007669"/>
    <property type="project" value="UniProtKB-SubCell"/>
</dbReference>
<dbReference type="GO" id="GO:0019871">
    <property type="term" value="F:sodium channel inhibitor activity"/>
    <property type="evidence" value="ECO:0007669"/>
    <property type="project" value="InterPro"/>
</dbReference>
<dbReference type="GO" id="GO:0090729">
    <property type="term" value="F:toxin activity"/>
    <property type="evidence" value="ECO:0007669"/>
    <property type="project" value="UniProtKB-KW"/>
</dbReference>
<dbReference type="InterPro" id="IPR008036">
    <property type="entry name" value="Conotoxin_mu-typ"/>
</dbReference>
<dbReference type="Pfam" id="PF05374">
    <property type="entry name" value="Mu-conotoxin"/>
    <property type="match status" value="1"/>
</dbReference>
<dbReference type="PROSITE" id="PS60013">
    <property type="entry name" value="MU_CONOTOXIN"/>
    <property type="match status" value="1"/>
</dbReference>
<keyword id="KW-0002">3D-structure</keyword>
<keyword id="KW-0027">Amidation</keyword>
<keyword id="KW-0165">Cleavage on pair of basic residues</keyword>
<keyword id="KW-0903">Direct protein sequencing</keyword>
<keyword id="KW-1015">Disulfide bond</keyword>
<keyword id="KW-0379">Hydroxylation</keyword>
<keyword id="KW-0872">Ion channel impairing toxin</keyword>
<keyword id="KW-0528">Neurotoxin</keyword>
<keyword id="KW-0964">Secreted</keyword>
<keyword id="KW-0732">Signal</keyword>
<keyword id="KW-0800">Toxin</keyword>
<keyword id="KW-0738">Voltage-gated sodium channel impairing toxin</keyword>